<reference key="1">
    <citation type="submission" date="2002-12" db="EMBL/GenBank/DDBJ databases">
        <title>Complete genome sequence of Vibrio vulnificus CMCP6.</title>
        <authorList>
            <person name="Rhee J.H."/>
            <person name="Kim S.Y."/>
            <person name="Chung S.S."/>
            <person name="Kim J.J."/>
            <person name="Moon Y.H."/>
            <person name="Jeong H."/>
            <person name="Choy H.E."/>
        </authorList>
    </citation>
    <scope>NUCLEOTIDE SEQUENCE [LARGE SCALE GENOMIC DNA]</scope>
    <source>
        <strain>CMCP6</strain>
    </source>
</reference>
<proteinExistence type="inferred from homology"/>
<sequence length="155" mass="17548">MGASVKPAARRNARQFALQAIYSWQITKENVATIEAQFLAGEKYDEEEHRAAEPALAAPETDVAYFRDLLTGVVLSHTELDSKIRPYVSRPMQDLDMMELALLRLAMYEMTRREDVPYKVVINEAIELAKVFAAEDSHKFVNGVLDKAAPHVRKK</sequence>
<keyword id="KW-0694">RNA-binding</keyword>
<keyword id="KW-0804">Transcription</keyword>
<keyword id="KW-0889">Transcription antitermination</keyword>
<keyword id="KW-0805">Transcription regulation</keyword>
<dbReference type="EMBL" id="AE016795">
    <property type="protein sequence ID" value="AAO08848.1"/>
    <property type="molecule type" value="Genomic_DNA"/>
</dbReference>
<dbReference type="RefSeq" id="WP_011078423.1">
    <property type="nucleotide sequence ID" value="NC_004459.3"/>
</dbReference>
<dbReference type="SMR" id="Q8DFA0"/>
<dbReference type="GeneID" id="93894660"/>
<dbReference type="KEGG" id="vvu:VV1_0318"/>
<dbReference type="HOGENOM" id="CLU_087843_4_1_6"/>
<dbReference type="Proteomes" id="UP000002275">
    <property type="component" value="Chromosome 1"/>
</dbReference>
<dbReference type="GO" id="GO:0005829">
    <property type="term" value="C:cytosol"/>
    <property type="evidence" value="ECO:0007669"/>
    <property type="project" value="TreeGrafter"/>
</dbReference>
<dbReference type="GO" id="GO:0003723">
    <property type="term" value="F:RNA binding"/>
    <property type="evidence" value="ECO:0007669"/>
    <property type="project" value="UniProtKB-UniRule"/>
</dbReference>
<dbReference type="GO" id="GO:0006353">
    <property type="term" value="P:DNA-templated transcription termination"/>
    <property type="evidence" value="ECO:0007669"/>
    <property type="project" value="UniProtKB-UniRule"/>
</dbReference>
<dbReference type="GO" id="GO:0031564">
    <property type="term" value="P:transcription antitermination"/>
    <property type="evidence" value="ECO:0007669"/>
    <property type="project" value="UniProtKB-KW"/>
</dbReference>
<dbReference type="FunFam" id="1.10.940.10:FF:000001">
    <property type="entry name" value="Transcription antitermination factor NusB"/>
    <property type="match status" value="1"/>
</dbReference>
<dbReference type="Gene3D" id="1.10.940.10">
    <property type="entry name" value="NusB-like"/>
    <property type="match status" value="1"/>
</dbReference>
<dbReference type="HAMAP" id="MF_00073">
    <property type="entry name" value="NusB"/>
    <property type="match status" value="1"/>
</dbReference>
<dbReference type="InterPro" id="IPR035926">
    <property type="entry name" value="NusB-like_sf"/>
</dbReference>
<dbReference type="InterPro" id="IPR011605">
    <property type="entry name" value="NusB_fam"/>
</dbReference>
<dbReference type="InterPro" id="IPR006027">
    <property type="entry name" value="NusB_RsmB_TIM44"/>
</dbReference>
<dbReference type="NCBIfam" id="TIGR01951">
    <property type="entry name" value="nusB"/>
    <property type="match status" value="1"/>
</dbReference>
<dbReference type="PANTHER" id="PTHR11078:SF3">
    <property type="entry name" value="ANTITERMINATION NUSB DOMAIN-CONTAINING PROTEIN"/>
    <property type="match status" value="1"/>
</dbReference>
<dbReference type="PANTHER" id="PTHR11078">
    <property type="entry name" value="N UTILIZATION SUBSTANCE PROTEIN B-RELATED"/>
    <property type="match status" value="1"/>
</dbReference>
<dbReference type="Pfam" id="PF01029">
    <property type="entry name" value="NusB"/>
    <property type="match status" value="1"/>
</dbReference>
<dbReference type="SUPFAM" id="SSF48013">
    <property type="entry name" value="NusB-like"/>
    <property type="match status" value="1"/>
</dbReference>
<feature type="chain" id="PRO_0000176605" description="Transcription antitermination protein NusB">
    <location>
        <begin position="1"/>
        <end position="155"/>
    </location>
</feature>
<evidence type="ECO:0000255" key="1">
    <source>
        <dbReference type="HAMAP-Rule" id="MF_00073"/>
    </source>
</evidence>
<organism>
    <name type="scientific">Vibrio vulnificus (strain CMCP6)</name>
    <dbReference type="NCBI Taxonomy" id="216895"/>
    <lineage>
        <taxon>Bacteria</taxon>
        <taxon>Pseudomonadati</taxon>
        <taxon>Pseudomonadota</taxon>
        <taxon>Gammaproteobacteria</taxon>
        <taxon>Vibrionales</taxon>
        <taxon>Vibrionaceae</taxon>
        <taxon>Vibrio</taxon>
    </lineage>
</organism>
<gene>
    <name evidence="1" type="primary">nusB</name>
    <name type="ordered locus">VV1_0318</name>
</gene>
<accession>Q8DFA0</accession>
<name>NUSB_VIBVU</name>
<comment type="function">
    <text evidence="1">Involved in transcription antitermination. Required for transcription of ribosomal RNA (rRNA) genes. Binds specifically to the boxA antiterminator sequence of the ribosomal RNA (rrn) operons.</text>
</comment>
<comment type="similarity">
    <text evidence="1">Belongs to the NusB family.</text>
</comment>
<protein>
    <recommendedName>
        <fullName evidence="1">Transcription antitermination protein NusB</fullName>
    </recommendedName>
    <alternativeName>
        <fullName evidence="1">Antitermination factor NusB</fullName>
    </alternativeName>
</protein>